<name>RUVB_UREP2</name>
<feature type="chain" id="PRO_1000074108" description="Holliday junction branch migration complex subunit RuvB">
    <location>
        <begin position="1"/>
        <end position="312"/>
    </location>
</feature>
<feature type="region of interest" description="Large ATPase domain (RuvB-L)" evidence="1">
    <location>
        <begin position="1"/>
        <end position="168"/>
    </location>
</feature>
<feature type="region of interest" description="Small ATPAse domain (RuvB-S)" evidence="1">
    <location>
        <begin position="169"/>
        <end position="234"/>
    </location>
</feature>
<feature type="region of interest" description="Head domain (RuvB-H)" evidence="1">
    <location>
        <begin position="237"/>
        <end position="312"/>
    </location>
</feature>
<feature type="binding site" evidence="1">
    <location>
        <position position="8"/>
    </location>
    <ligand>
        <name>ATP</name>
        <dbReference type="ChEBI" id="CHEBI:30616"/>
    </ligand>
</feature>
<feature type="binding site" evidence="1">
    <location>
        <position position="49"/>
    </location>
    <ligand>
        <name>ATP</name>
        <dbReference type="ChEBI" id="CHEBI:30616"/>
    </ligand>
</feature>
<feature type="binding site" evidence="1">
    <location>
        <position position="52"/>
    </location>
    <ligand>
        <name>ATP</name>
        <dbReference type="ChEBI" id="CHEBI:30616"/>
    </ligand>
</feature>
<feature type="binding site" evidence="1">
    <location>
        <position position="53"/>
    </location>
    <ligand>
        <name>ATP</name>
        <dbReference type="ChEBI" id="CHEBI:30616"/>
    </ligand>
</feature>
<feature type="binding site" evidence="1">
    <location>
        <position position="53"/>
    </location>
    <ligand>
        <name>Mg(2+)</name>
        <dbReference type="ChEBI" id="CHEBI:18420"/>
    </ligand>
</feature>
<feature type="binding site" evidence="1">
    <location>
        <position position="54"/>
    </location>
    <ligand>
        <name>ATP</name>
        <dbReference type="ChEBI" id="CHEBI:30616"/>
    </ligand>
</feature>
<feature type="binding site" evidence="1">
    <location>
        <begin position="115"/>
        <end position="117"/>
    </location>
    <ligand>
        <name>ATP</name>
        <dbReference type="ChEBI" id="CHEBI:30616"/>
    </ligand>
</feature>
<feature type="binding site" evidence="1">
    <location>
        <position position="158"/>
    </location>
    <ligand>
        <name>ATP</name>
        <dbReference type="ChEBI" id="CHEBI:30616"/>
    </ligand>
</feature>
<feature type="binding site" evidence="1">
    <location>
        <position position="168"/>
    </location>
    <ligand>
        <name>ATP</name>
        <dbReference type="ChEBI" id="CHEBI:30616"/>
    </ligand>
</feature>
<feature type="binding site" evidence="1">
    <location>
        <position position="206"/>
    </location>
    <ligand>
        <name>ATP</name>
        <dbReference type="ChEBI" id="CHEBI:30616"/>
    </ligand>
</feature>
<feature type="binding site" evidence="1">
    <location>
        <position position="290"/>
    </location>
    <ligand>
        <name>DNA</name>
        <dbReference type="ChEBI" id="CHEBI:16991"/>
    </ligand>
</feature>
<feature type="binding site" evidence="1">
    <location>
        <position position="295"/>
    </location>
    <ligand>
        <name>DNA</name>
        <dbReference type="ChEBI" id="CHEBI:16991"/>
    </ligand>
</feature>
<gene>
    <name evidence="1" type="primary">ruvB</name>
    <name type="ordered locus">UPA3_0467</name>
</gene>
<organism>
    <name type="scientific">Ureaplasma parvum serovar 3 (strain ATCC 27815 / 27 / NCTC 11736)</name>
    <dbReference type="NCBI Taxonomy" id="505682"/>
    <lineage>
        <taxon>Bacteria</taxon>
        <taxon>Bacillati</taxon>
        <taxon>Mycoplasmatota</taxon>
        <taxon>Mycoplasmoidales</taxon>
        <taxon>Mycoplasmoidaceae</taxon>
        <taxon>Ureaplasma</taxon>
    </lineage>
</organism>
<accession>B1AJ89</accession>
<keyword id="KW-0067">ATP-binding</keyword>
<keyword id="KW-0963">Cytoplasm</keyword>
<keyword id="KW-0227">DNA damage</keyword>
<keyword id="KW-0233">DNA recombination</keyword>
<keyword id="KW-0234">DNA repair</keyword>
<keyword id="KW-0238">DNA-binding</keyword>
<keyword id="KW-0378">Hydrolase</keyword>
<keyword id="KW-0547">Nucleotide-binding</keyword>
<sequence>MKTNYEFRPQYLKDFIGKEQLKNNLKVYLTASKRLENSFDHTLLHGLSGTGKTTLALIIANEMNVNCHITQGNLLNKPIDIINLLSLIKENDVVFIDEIHACGLGAFETLYSVLEDFCIDINIGKDFNSKMTRLKIPHFTLIGATTIFGKIPKSLEERFGHIFHLNEYEPSEISAIILKNNQMHFQIDLNEEEIDLIANNAKGIPRLANRLLKRVVDFKINGFNDIKNIFKKIQIYEFGLDEQDINYLNVLYRQDNEIGLKSIAQILRLDQYTIETKIEPYLIQHHFINKNLRGRKITIEGIDFLKNNQLIK</sequence>
<reference key="1">
    <citation type="submission" date="2008-02" db="EMBL/GenBank/DDBJ databases">
        <title>Genome sequence of Ureaplasma parvum serovar 3.</title>
        <authorList>
            <person name="Methe B.A."/>
            <person name="Glass J."/>
            <person name="Waites K."/>
            <person name="Shrivastava S."/>
        </authorList>
    </citation>
    <scope>NUCLEOTIDE SEQUENCE [LARGE SCALE GENOMIC DNA]</scope>
    <source>
        <strain>ATCC 27815 / 27 / NCTC 11736</strain>
    </source>
</reference>
<protein>
    <recommendedName>
        <fullName evidence="1">Holliday junction branch migration complex subunit RuvB</fullName>
        <ecNumber evidence="1">3.6.4.-</ecNumber>
    </recommendedName>
</protein>
<evidence type="ECO:0000255" key="1">
    <source>
        <dbReference type="HAMAP-Rule" id="MF_00016"/>
    </source>
</evidence>
<proteinExistence type="inferred from homology"/>
<dbReference type="EC" id="3.6.4.-" evidence="1"/>
<dbReference type="EMBL" id="CP000942">
    <property type="protein sequence ID" value="ACA33130.1"/>
    <property type="molecule type" value="Genomic_DNA"/>
</dbReference>
<dbReference type="RefSeq" id="WP_006689015.1">
    <property type="nucleotide sequence ID" value="NC_010503.1"/>
</dbReference>
<dbReference type="SMR" id="B1AJ89"/>
<dbReference type="GeneID" id="29672567"/>
<dbReference type="KEGG" id="upa:UPA3_0467"/>
<dbReference type="HOGENOM" id="CLU_055599_1_0_14"/>
<dbReference type="Proteomes" id="UP000002162">
    <property type="component" value="Chromosome"/>
</dbReference>
<dbReference type="GO" id="GO:0005737">
    <property type="term" value="C:cytoplasm"/>
    <property type="evidence" value="ECO:0007669"/>
    <property type="project" value="UniProtKB-SubCell"/>
</dbReference>
<dbReference type="GO" id="GO:0048476">
    <property type="term" value="C:Holliday junction resolvase complex"/>
    <property type="evidence" value="ECO:0007669"/>
    <property type="project" value="UniProtKB-UniRule"/>
</dbReference>
<dbReference type="GO" id="GO:0005524">
    <property type="term" value="F:ATP binding"/>
    <property type="evidence" value="ECO:0007669"/>
    <property type="project" value="UniProtKB-UniRule"/>
</dbReference>
<dbReference type="GO" id="GO:0016887">
    <property type="term" value="F:ATP hydrolysis activity"/>
    <property type="evidence" value="ECO:0007669"/>
    <property type="project" value="InterPro"/>
</dbReference>
<dbReference type="GO" id="GO:0000400">
    <property type="term" value="F:four-way junction DNA binding"/>
    <property type="evidence" value="ECO:0007669"/>
    <property type="project" value="UniProtKB-UniRule"/>
</dbReference>
<dbReference type="GO" id="GO:0009378">
    <property type="term" value="F:four-way junction helicase activity"/>
    <property type="evidence" value="ECO:0007669"/>
    <property type="project" value="InterPro"/>
</dbReference>
<dbReference type="GO" id="GO:0006310">
    <property type="term" value="P:DNA recombination"/>
    <property type="evidence" value="ECO:0007669"/>
    <property type="project" value="UniProtKB-UniRule"/>
</dbReference>
<dbReference type="GO" id="GO:0006281">
    <property type="term" value="P:DNA repair"/>
    <property type="evidence" value="ECO:0007669"/>
    <property type="project" value="UniProtKB-UniRule"/>
</dbReference>
<dbReference type="CDD" id="cd00009">
    <property type="entry name" value="AAA"/>
    <property type="match status" value="1"/>
</dbReference>
<dbReference type="Gene3D" id="1.10.8.60">
    <property type="match status" value="1"/>
</dbReference>
<dbReference type="Gene3D" id="3.40.50.300">
    <property type="entry name" value="P-loop containing nucleotide triphosphate hydrolases"/>
    <property type="match status" value="1"/>
</dbReference>
<dbReference type="Gene3D" id="1.10.10.10">
    <property type="entry name" value="Winged helix-like DNA-binding domain superfamily/Winged helix DNA-binding domain"/>
    <property type="match status" value="1"/>
</dbReference>
<dbReference type="HAMAP" id="MF_00016">
    <property type="entry name" value="DNA_HJ_migration_RuvB"/>
    <property type="match status" value="1"/>
</dbReference>
<dbReference type="InterPro" id="IPR003593">
    <property type="entry name" value="AAA+_ATPase"/>
</dbReference>
<dbReference type="InterPro" id="IPR041445">
    <property type="entry name" value="AAA_lid_4"/>
</dbReference>
<dbReference type="InterPro" id="IPR004605">
    <property type="entry name" value="DNA_helicase_Holl-junc_RuvB"/>
</dbReference>
<dbReference type="InterPro" id="IPR027417">
    <property type="entry name" value="P-loop_NTPase"/>
</dbReference>
<dbReference type="InterPro" id="IPR008824">
    <property type="entry name" value="RuvB-like_N"/>
</dbReference>
<dbReference type="InterPro" id="IPR008823">
    <property type="entry name" value="RuvB_C"/>
</dbReference>
<dbReference type="InterPro" id="IPR036388">
    <property type="entry name" value="WH-like_DNA-bd_sf"/>
</dbReference>
<dbReference type="InterPro" id="IPR036390">
    <property type="entry name" value="WH_DNA-bd_sf"/>
</dbReference>
<dbReference type="NCBIfam" id="NF000868">
    <property type="entry name" value="PRK00080.1"/>
    <property type="match status" value="1"/>
</dbReference>
<dbReference type="NCBIfam" id="TIGR00635">
    <property type="entry name" value="ruvB"/>
    <property type="match status" value="1"/>
</dbReference>
<dbReference type="PANTHER" id="PTHR42848">
    <property type="match status" value="1"/>
</dbReference>
<dbReference type="PANTHER" id="PTHR42848:SF1">
    <property type="entry name" value="HOLLIDAY JUNCTION BRANCH MIGRATION COMPLEX SUBUNIT RUVB"/>
    <property type="match status" value="1"/>
</dbReference>
<dbReference type="Pfam" id="PF17864">
    <property type="entry name" value="AAA_lid_4"/>
    <property type="match status" value="1"/>
</dbReference>
<dbReference type="Pfam" id="PF05491">
    <property type="entry name" value="RuvB_C"/>
    <property type="match status" value="1"/>
</dbReference>
<dbReference type="Pfam" id="PF05496">
    <property type="entry name" value="RuvB_N"/>
    <property type="match status" value="1"/>
</dbReference>
<dbReference type="SMART" id="SM00382">
    <property type="entry name" value="AAA"/>
    <property type="match status" value="1"/>
</dbReference>
<dbReference type="SUPFAM" id="SSF52540">
    <property type="entry name" value="P-loop containing nucleoside triphosphate hydrolases"/>
    <property type="match status" value="1"/>
</dbReference>
<dbReference type="SUPFAM" id="SSF46785">
    <property type="entry name" value="Winged helix' DNA-binding domain"/>
    <property type="match status" value="1"/>
</dbReference>
<comment type="function">
    <text evidence="1">The RuvA-RuvB-RuvC complex processes Holliday junction (HJ) DNA during genetic recombination and DNA repair, while the RuvA-RuvB complex plays an important role in the rescue of blocked DNA replication forks via replication fork reversal (RFR). RuvA specifically binds to HJ cruciform DNA, conferring on it an open structure. The RuvB hexamer acts as an ATP-dependent pump, pulling dsDNA into and through the RuvAB complex. RuvB forms 2 homohexamers on either side of HJ DNA bound by 1 or 2 RuvA tetramers; 4 subunits per hexamer contact DNA at a time. Coordinated motions by a converter formed by DNA-disengaged RuvB subunits stimulates ATP hydrolysis and nucleotide exchange. Immobilization of the converter enables RuvB to convert the ATP-contained energy into a lever motion, pulling 2 nucleotides of DNA out of the RuvA tetramer per ATP hydrolyzed, thus driving DNA branch migration. The RuvB motors rotate together with the DNA substrate, which together with the progressing nucleotide cycle form the mechanistic basis for DNA recombination by continuous HJ branch migration. Branch migration allows RuvC to scan DNA until it finds its consensus sequence, where it cleaves and resolves cruciform DNA.</text>
</comment>
<comment type="catalytic activity">
    <reaction evidence="1">
        <text>ATP + H2O = ADP + phosphate + H(+)</text>
        <dbReference type="Rhea" id="RHEA:13065"/>
        <dbReference type="ChEBI" id="CHEBI:15377"/>
        <dbReference type="ChEBI" id="CHEBI:15378"/>
        <dbReference type="ChEBI" id="CHEBI:30616"/>
        <dbReference type="ChEBI" id="CHEBI:43474"/>
        <dbReference type="ChEBI" id="CHEBI:456216"/>
    </reaction>
</comment>
<comment type="subunit">
    <text evidence="1">Homohexamer. Forms an RuvA(8)-RuvB(12)-Holliday junction (HJ) complex. HJ DNA is sandwiched between 2 RuvA tetramers; dsDNA enters through RuvA and exits via RuvB. An RuvB hexamer assembles on each DNA strand where it exits the tetramer. Each RuvB hexamer is contacted by two RuvA subunits (via domain III) on 2 adjacent RuvB subunits; this complex drives branch migration. In the full resolvosome a probable DNA-RuvA(4)-RuvB(12)-RuvC(2) complex forms which resolves the HJ.</text>
</comment>
<comment type="subcellular location">
    <subcellularLocation>
        <location evidence="1">Cytoplasm</location>
    </subcellularLocation>
</comment>
<comment type="domain">
    <text evidence="1">Has 3 domains, the large (RuvB-L) and small ATPase (RuvB-S) domains and the C-terminal head (RuvB-H) domain. The head domain binds DNA, while the ATPase domains jointly bind ATP, ADP or are empty depending on the state of the subunit in the translocation cycle. During a single DNA translocation step the structure of each domain remains the same, but their relative positions change.</text>
</comment>
<comment type="similarity">
    <text evidence="1">Belongs to the RuvB family.</text>
</comment>